<sequence length="371" mass="41781">MSNASKKVIVGMSGGVDSSVSAYLLMQQGYQVEGLFMKNWEEDDTDEYCAASDDLADAEKVCETLGIELHTINFAAEYWDNVFEYFLEEYKAGRTPNPDIMCNKEIKFKAFLEFAAEALDADYIATGHYVRRQQRDGKWEMLRGLDSNKDQSYFLYTLSHEHIAQTLFPVGELEKPEVRRIAEEQGLVTADKKDSTGICFIGERKFKDFLQQYLPAKPGPIESVEGEALGEHEGLMYHTLGQRKGLHIGGMADNSGEPWYVVDKDVERNVLIVAQGKKHPRLYSQGLIAGQLHWVSRNAPPEAFDCTVKTRYRQQDIPCRVTPLSNGDFQVQFKEPVAAVTPGQSAVFYSDDVCLGGGIIEQRITDFEVKL</sequence>
<name>MNMA_IDILO</name>
<proteinExistence type="inferred from homology"/>
<gene>
    <name evidence="1" type="primary">mnmA</name>
    <name type="synonym">trmU</name>
    <name type="ordered locus">IL1310</name>
</gene>
<accession>Q5QYZ7</accession>
<feature type="chain" id="PRO_0000121639" description="tRNA-specific 2-thiouridylase MnmA">
    <location>
        <begin position="1"/>
        <end position="371"/>
    </location>
</feature>
<feature type="region of interest" description="Interaction with target base in tRNA" evidence="1">
    <location>
        <begin position="97"/>
        <end position="99"/>
    </location>
</feature>
<feature type="region of interest" description="Interaction with tRNA" evidence="1">
    <location>
        <begin position="149"/>
        <end position="151"/>
    </location>
</feature>
<feature type="region of interest" description="Interaction with tRNA" evidence="1">
    <location>
        <begin position="311"/>
        <end position="312"/>
    </location>
</feature>
<feature type="active site" description="Nucleophile" evidence="1">
    <location>
        <position position="102"/>
    </location>
</feature>
<feature type="active site" description="Cysteine persulfide intermediate" evidence="1">
    <location>
        <position position="199"/>
    </location>
</feature>
<feature type="binding site" evidence="1">
    <location>
        <begin position="11"/>
        <end position="18"/>
    </location>
    <ligand>
        <name>ATP</name>
        <dbReference type="ChEBI" id="CHEBI:30616"/>
    </ligand>
</feature>
<feature type="binding site" evidence="1">
    <location>
        <position position="37"/>
    </location>
    <ligand>
        <name>ATP</name>
        <dbReference type="ChEBI" id="CHEBI:30616"/>
    </ligand>
</feature>
<feature type="binding site" evidence="1">
    <location>
        <position position="127"/>
    </location>
    <ligand>
        <name>ATP</name>
        <dbReference type="ChEBI" id="CHEBI:30616"/>
    </ligand>
</feature>
<feature type="site" description="Interaction with tRNA" evidence="1">
    <location>
        <position position="128"/>
    </location>
</feature>
<feature type="site" description="Interaction with tRNA" evidence="1">
    <location>
        <position position="344"/>
    </location>
</feature>
<feature type="disulfide bond" description="Alternate" evidence="1">
    <location>
        <begin position="102"/>
        <end position="199"/>
    </location>
</feature>
<evidence type="ECO:0000255" key="1">
    <source>
        <dbReference type="HAMAP-Rule" id="MF_00144"/>
    </source>
</evidence>
<organism>
    <name type="scientific">Idiomarina loihiensis (strain ATCC BAA-735 / DSM 15497 / L2-TR)</name>
    <dbReference type="NCBI Taxonomy" id="283942"/>
    <lineage>
        <taxon>Bacteria</taxon>
        <taxon>Pseudomonadati</taxon>
        <taxon>Pseudomonadota</taxon>
        <taxon>Gammaproteobacteria</taxon>
        <taxon>Alteromonadales</taxon>
        <taxon>Idiomarinaceae</taxon>
        <taxon>Idiomarina</taxon>
    </lineage>
</organism>
<protein>
    <recommendedName>
        <fullName evidence="1">tRNA-specific 2-thiouridylase MnmA</fullName>
        <ecNumber evidence="1">2.8.1.13</ecNumber>
    </recommendedName>
</protein>
<dbReference type="EC" id="2.8.1.13" evidence="1"/>
<dbReference type="EMBL" id="AE017340">
    <property type="protein sequence ID" value="AAV82150.1"/>
    <property type="molecule type" value="Genomic_DNA"/>
</dbReference>
<dbReference type="RefSeq" id="WP_011234556.1">
    <property type="nucleotide sequence ID" value="NC_006512.1"/>
</dbReference>
<dbReference type="SMR" id="Q5QYZ7"/>
<dbReference type="STRING" id="283942.IL1310"/>
<dbReference type="GeneID" id="41336486"/>
<dbReference type="KEGG" id="ilo:IL1310"/>
<dbReference type="eggNOG" id="COG0482">
    <property type="taxonomic scope" value="Bacteria"/>
</dbReference>
<dbReference type="HOGENOM" id="CLU_035188_1_0_6"/>
<dbReference type="OrthoDB" id="9800696at2"/>
<dbReference type="Proteomes" id="UP000001171">
    <property type="component" value="Chromosome"/>
</dbReference>
<dbReference type="GO" id="GO:0005737">
    <property type="term" value="C:cytoplasm"/>
    <property type="evidence" value="ECO:0007669"/>
    <property type="project" value="UniProtKB-SubCell"/>
</dbReference>
<dbReference type="GO" id="GO:0005524">
    <property type="term" value="F:ATP binding"/>
    <property type="evidence" value="ECO:0007669"/>
    <property type="project" value="UniProtKB-KW"/>
</dbReference>
<dbReference type="GO" id="GO:0000049">
    <property type="term" value="F:tRNA binding"/>
    <property type="evidence" value="ECO:0007669"/>
    <property type="project" value="UniProtKB-KW"/>
</dbReference>
<dbReference type="GO" id="GO:0103016">
    <property type="term" value="F:tRNA-uridine 2-sulfurtransferase activity"/>
    <property type="evidence" value="ECO:0007669"/>
    <property type="project" value="UniProtKB-EC"/>
</dbReference>
<dbReference type="GO" id="GO:0002143">
    <property type="term" value="P:tRNA wobble position uridine thiolation"/>
    <property type="evidence" value="ECO:0007669"/>
    <property type="project" value="TreeGrafter"/>
</dbReference>
<dbReference type="CDD" id="cd01998">
    <property type="entry name" value="MnmA_TRMU-like"/>
    <property type="match status" value="1"/>
</dbReference>
<dbReference type="FunFam" id="2.30.30.280:FF:000001">
    <property type="entry name" value="tRNA-specific 2-thiouridylase MnmA"/>
    <property type="match status" value="1"/>
</dbReference>
<dbReference type="FunFam" id="2.40.30.10:FF:000023">
    <property type="entry name" value="tRNA-specific 2-thiouridylase MnmA"/>
    <property type="match status" value="1"/>
</dbReference>
<dbReference type="FunFam" id="3.40.50.620:FF:000004">
    <property type="entry name" value="tRNA-specific 2-thiouridylase MnmA"/>
    <property type="match status" value="1"/>
</dbReference>
<dbReference type="Gene3D" id="2.30.30.280">
    <property type="entry name" value="Adenine nucleotide alpha hydrolases-like domains"/>
    <property type="match status" value="1"/>
</dbReference>
<dbReference type="Gene3D" id="3.40.50.620">
    <property type="entry name" value="HUPs"/>
    <property type="match status" value="1"/>
</dbReference>
<dbReference type="Gene3D" id="2.40.30.10">
    <property type="entry name" value="Translation factors"/>
    <property type="match status" value="1"/>
</dbReference>
<dbReference type="HAMAP" id="MF_00144">
    <property type="entry name" value="tRNA_thiouridyl_MnmA"/>
    <property type="match status" value="1"/>
</dbReference>
<dbReference type="InterPro" id="IPR004506">
    <property type="entry name" value="MnmA-like"/>
</dbReference>
<dbReference type="InterPro" id="IPR046885">
    <property type="entry name" value="MnmA-like_C"/>
</dbReference>
<dbReference type="InterPro" id="IPR046884">
    <property type="entry name" value="MnmA-like_central"/>
</dbReference>
<dbReference type="InterPro" id="IPR023382">
    <property type="entry name" value="MnmA-like_central_sf"/>
</dbReference>
<dbReference type="InterPro" id="IPR014729">
    <property type="entry name" value="Rossmann-like_a/b/a_fold"/>
</dbReference>
<dbReference type="NCBIfam" id="NF001138">
    <property type="entry name" value="PRK00143.1"/>
    <property type="match status" value="1"/>
</dbReference>
<dbReference type="NCBIfam" id="TIGR00420">
    <property type="entry name" value="trmU"/>
    <property type="match status" value="1"/>
</dbReference>
<dbReference type="PANTHER" id="PTHR11933:SF5">
    <property type="entry name" value="MITOCHONDRIAL TRNA-SPECIFIC 2-THIOURIDYLASE 1"/>
    <property type="match status" value="1"/>
</dbReference>
<dbReference type="PANTHER" id="PTHR11933">
    <property type="entry name" value="TRNA 5-METHYLAMINOMETHYL-2-THIOURIDYLATE -METHYLTRANSFERASE"/>
    <property type="match status" value="1"/>
</dbReference>
<dbReference type="Pfam" id="PF03054">
    <property type="entry name" value="tRNA_Me_trans"/>
    <property type="match status" value="1"/>
</dbReference>
<dbReference type="Pfam" id="PF20258">
    <property type="entry name" value="tRNA_Me_trans_C"/>
    <property type="match status" value="1"/>
</dbReference>
<dbReference type="Pfam" id="PF20259">
    <property type="entry name" value="tRNA_Me_trans_M"/>
    <property type="match status" value="1"/>
</dbReference>
<dbReference type="SUPFAM" id="SSF52402">
    <property type="entry name" value="Adenine nucleotide alpha hydrolases-like"/>
    <property type="match status" value="1"/>
</dbReference>
<keyword id="KW-0067">ATP-binding</keyword>
<keyword id="KW-0963">Cytoplasm</keyword>
<keyword id="KW-1015">Disulfide bond</keyword>
<keyword id="KW-0547">Nucleotide-binding</keyword>
<keyword id="KW-1185">Reference proteome</keyword>
<keyword id="KW-0694">RNA-binding</keyword>
<keyword id="KW-0808">Transferase</keyword>
<keyword id="KW-0819">tRNA processing</keyword>
<keyword id="KW-0820">tRNA-binding</keyword>
<reference key="1">
    <citation type="journal article" date="2004" name="Proc. Natl. Acad. Sci. U.S.A.">
        <title>Genome sequence of the deep-sea gamma-proteobacterium Idiomarina loihiensis reveals amino acid fermentation as a source of carbon and energy.</title>
        <authorList>
            <person name="Hou S."/>
            <person name="Saw J.H."/>
            <person name="Lee K.S."/>
            <person name="Freitas T.A."/>
            <person name="Belisle C."/>
            <person name="Kawarabayasi Y."/>
            <person name="Donachie S.P."/>
            <person name="Pikina A."/>
            <person name="Galperin M.Y."/>
            <person name="Koonin E.V."/>
            <person name="Makarova K.S."/>
            <person name="Omelchenko M.V."/>
            <person name="Sorokin A."/>
            <person name="Wolf Y.I."/>
            <person name="Li Q.X."/>
            <person name="Keum Y.S."/>
            <person name="Campbell S."/>
            <person name="Denery J."/>
            <person name="Aizawa S."/>
            <person name="Shibata S."/>
            <person name="Malahoff A."/>
            <person name="Alam M."/>
        </authorList>
    </citation>
    <scope>NUCLEOTIDE SEQUENCE [LARGE SCALE GENOMIC DNA]</scope>
    <source>
        <strain>ATCC BAA-735 / DSM 15497 / L2-TR</strain>
    </source>
</reference>
<comment type="function">
    <text evidence="1">Catalyzes the 2-thiolation of uridine at the wobble position (U34) of tRNA, leading to the formation of s(2)U34.</text>
</comment>
<comment type="catalytic activity">
    <reaction evidence="1">
        <text>S-sulfanyl-L-cysteinyl-[protein] + uridine(34) in tRNA + AH2 + ATP = 2-thiouridine(34) in tRNA + L-cysteinyl-[protein] + A + AMP + diphosphate + H(+)</text>
        <dbReference type="Rhea" id="RHEA:47032"/>
        <dbReference type="Rhea" id="RHEA-COMP:10131"/>
        <dbReference type="Rhea" id="RHEA-COMP:11726"/>
        <dbReference type="Rhea" id="RHEA-COMP:11727"/>
        <dbReference type="Rhea" id="RHEA-COMP:11728"/>
        <dbReference type="ChEBI" id="CHEBI:13193"/>
        <dbReference type="ChEBI" id="CHEBI:15378"/>
        <dbReference type="ChEBI" id="CHEBI:17499"/>
        <dbReference type="ChEBI" id="CHEBI:29950"/>
        <dbReference type="ChEBI" id="CHEBI:30616"/>
        <dbReference type="ChEBI" id="CHEBI:33019"/>
        <dbReference type="ChEBI" id="CHEBI:61963"/>
        <dbReference type="ChEBI" id="CHEBI:65315"/>
        <dbReference type="ChEBI" id="CHEBI:87170"/>
        <dbReference type="ChEBI" id="CHEBI:456215"/>
        <dbReference type="EC" id="2.8.1.13"/>
    </reaction>
</comment>
<comment type="subcellular location">
    <subcellularLocation>
        <location evidence="1">Cytoplasm</location>
    </subcellularLocation>
</comment>
<comment type="similarity">
    <text evidence="1">Belongs to the MnmA/TRMU family.</text>
</comment>